<dbReference type="EMBL" id="M95192">
    <property type="protein sequence ID" value="AAA28607.1"/>
    <property type="status" value="ALT_INIT"/>
    <property type="molecule type" value="mRNA"/>
</dbReference>
<dbReference type="EMBL" id="X67239">
    <property type="protein sequence ID" value="CAA47664.1"/>
    <property type="molecule type" value="mRNA"/>
</dbReference>
<dbReference type="EMBL" id="AE014297">
    <property type="protein sequence ID" value="AAF55790.1"/>
    <property type="molecule type" value="Genomic_DNA"/>
</dbReference>
<dbReference type="EMBL" id="AE014297">
    <property type="protein sequence ID" value="AAF55791.1"/>
    <property type="molecule type" value="Genomic_DNA"/>
</dbReference>
<dbReference type="EMBL" id="AE014297">
    <property type="protein sequence ID" value="AAN14357.1"/>
    <property type="molecule type" value="Genomic_DNA"/>
</dbReference>
<dbReference type="EMBL" id="AE014297">
    <property type="protein sequence ID" value="AAN14358.1"/>
    <property type="molecule type" value="Genomic_DNA"/>
</dbReference>
<dbReference type="EMBL" id="BT015220">
    <property type="protein sequence ID" value="AAT94449.1"/>
    <property type="molecule type" value="mRNA"/>
</dbReference>
<dbReference type="EMBL" id="AY051806">
    <property type="protein sequence ID" value="AAK93230.1"/>
    <property type="status" value="ALT_INIT"/>
    <property type="molecule type" value="mRNA"/>
</dbReference>
<dbReference type="PIR" id="A44067">
    <property type="entry name" value="A44067"/>
</dbReference>
<dbReference type="RefSeq" id="NP_524418.2">
    <molecule id="Q02308-2"/>
    <property type="nucleotide sequence ID" value="NM_079694.3"/>
</dbReference>
<dbReference type="RefSeq" id="NP_732533.1">
    <molecule id="Q02308-1"/>
    <property type="nucleotide sequence ID" value="NM_169907.2"/>
</dbReference>
<dbReference type="RefSeq" id="NP_732534.1">
    <molecule id="Q02308-1"/>
    <property type="nucleotide sequence ID" value="NM_169908.2"/>
</dbReference>
<dbReference type="RefSeq" id="NP_732535.1">
    <molecule id="Q02308-2"/>
    <property type="nucleotide sequence ID" value="NM_169909.2"/>
</dbReference>
<dbReference type="PDB" id="5E24">
    <property type="method" value="X-ray"/>
    <property type="resolution" value="2.14 A"/>
    <property type="chains" value="B/D=232-269"/>
</dbReference>
<dbReference type="PDBsum" id="5E24"/>
<dbReference type="SMR" id="Q02308"/>
<dbReference type="BioGRID" id="67421">
    <property type="interactions" value="147"/>
</dbReference>
<dbReference type="DIP" id="DIP-39152N"/>
<dbReference type="ELM" id="Q02308"/>
<dbReference type="FunCoup" id="Q02308">
    <property type="interactions" value="128"/>
</dbReference>
<dbReference type="IntAct" id="Q02308">
    <property type="interactions" value="5"/>
</dbReference>
<dbReference type="STRING" id="7227.FBpp0083322"/>
<dbReference type="GlyGen" id="Q02308">
    <property type="glycosylation" value="1 site"/>
</dbReference>
<dbReference type="iPTMnet" id="Q02308"/>
<dbReference type="PaxDb" id="7227-FBpp0083322"/>
<dbReference type="EnsemblMetazoa" id="FBtr0083914">
    <molecule id="Q02308-1"/>
    <property type="protein sequence ID" value="FBpp0083322"/>
    <property type="gene ID" value="FBgn0001169"/>
</dbReference>
<dbReference type="EnsemblMetazoa" id="FBtr0083915">
    <molecule id="Q02308-2"/>
    <property type="protein sequence ID" value="FBpp0083323"/>
    <property type="gene ID" value="FBgn0001169"/>
</dbReference>
<dbReference type="EnsemblMetazoa" id="FBtr0083916">
    <molecule id="Q02308-1"/>
    <property type="protein sequence ID" value="FBpp0083324"/>
    <property type="gene ID" value="FBgn0001169"/>
</dbReference>
<dbReference type="EnsemblMetazoa" id="FBtr0083917">
    <molecule id="Q02308-2"/>
    <property type="protein sequence ID" value="FBpp0083325"/>
    <property type="gene ID" value="FBgn0001169"/>
</dbReference>
<dbReference type="GeneID" id="42445"/>
<dbReference type="KEGG" id="dme:Dmel_CG5460"/>
<dbReference type="UCSC" id="CG5460-RA">
    <property type="organism name" value="d. melanogaster"/>
</dbReference>
<dbReference type="AGR" id="FB:FBgn0001169"/>
<dbReference type="CTD" id="42445"/>
<dbReference type="FlyBase" id="FBgn0001169">
    <property type="gene designation" value="H"/>
</dbReference>
<dbReference type="VEuPathDB" id="VectorBase:FBgn0001169"/>
<dbReference type="eggNOG" id="ENOG502S24X">
    <property type="taxonomic scope" value="Eukaryota"/>
</dbReference>
<dbReference type="HOGENOM" id="CLU_282042_0_0_1"/>
<dbReference type="InParanoid" id="Q02308"/>
<dbReference type="OMA" id="MHHYQAG"/>
<dbReference type="OrthoDB" id="8122370at2759"/>
<dbReference type="PhylomeDB" id="Q02308"/>
<dbReference type="SignaLink" id="Q02308"/>
<dbReference type="BioGRID-ORCS" id="42445">
    <property type="hits" value="0 hits in 3 CRISPR screens"/>
</dbReference>
<dbReference type="ChiTaRS" id="h">
    <property type="organism name" value="fly"/>
</dbReference>
<dbReference type="GenomeRNAi" id="42445"/>
<dbReference type="PRO" id="PR:Q02308"/>
<dbReference type="Proteomes" id="UP000000803">
    <property type="component" value="Chromosome 3R"/>
</dbReference>
<dbReference type="Bgee" id="FBgn0001169">
    <property type="expression patterns" value="Expressed in spermatogonium in testis and 233 other cell types or tissues"/>
</dbReference>
<dbReference type="ExpressionAtlas" id="Q02308">
    <property type="expression patterns" value="baseline and differential"/>
</dbReference>
<dbReference type="GO" id="GO:0090571">
    <property type="term" value="C:RNA polymerase II transcription repressor complex"/>
    <property type="evidence" value="ECO:0000353"/>
    <property type="project" value="FlyBase"/>
</dbReference>
<dbReference type="GO" id="GO:0003677">
    <property type="term" value="F:DNA binding"/>
    <property type="evidence" value="ECO:0007669"/>
    <property type="project" value="UniProtKB-KW"/>
</dbReference>
<dbReference type="GO" id="GO:0003714">
    <property type="term" value="F:transcription corepressor activity"/>
    <property type="evidence" value="ECO:0000314"/>
    <property type="project" value="FlyBase"/>
</dbReference>
<dbReference type="GO" id="GO:0008587">
    <property type="term" value="P:imaginal disc-derived wing margin morphogenesis"/>
    <property type="evidence" value="ECO:0000315"/>
    <property type="project" value="FlyBase"/>
</dbReference>
<dbReference type="GO" id="GO:0008586">
    <property type="term" value="P:imaginal disc-derived wing vein morphogenesis"/>
    <property type="evidence" value="ECO:0000315"/>
    <property type="project" value="FlyBase"/>
</dbReference>
<dbReference type="GO" id="GO:0036335">
    <property type="term" value="P:intestinal stem cell homeostasis"/>
    <property type="evidence" value="ECO:0000316"/>
    <property type="project" value="FlyBase"/>
</dbReference>
<dbReference type="GO" id="GO:0045746">
    <property type="term" value="P:negative regulation of Notch signaling pathway"/>
    <property type="evidence" value="ECO:0000315"/>
    <property type="project" value="FlyBase"/>
</dbReference>
<dbReference type="GO" id="GO:0000122">
    <property type="term" value="P:negative regulation of transcription by RNA polymerase II"/>
    <property type="evidence" value="ECO:0000314"/>
    <property type="project" value="FlyBase"/>
</dbReference>
<dbReference type="GO" id="GO:0008052">
    <property type="term" value="P:sensory organ boundary specification"/>
    <property type="evidence" value="ECO:0000315"/>
    <property type="project" value="FlyBase"/>
</dbReference>
<dbReference type="GO" id="GO:0016360">
    <property type="term" value="P:sensory organ precursor cell fate determination"/>
    <property type="evidence" value="ECO:0000315"/>
    <property type="project" value="FlyBase"/>
</dbReference>
<dbReference type="GO" id="GO:0035019">
    <property type="term" value="P:somatic stem cell population maintenance"/>
    <property type="evidence" value="ECO:0000315"/>
    <property type="project" value="FlyBase"/>
</dbReference>
<dbReference type="GO" id="GO:0048190">
    <property type="term" value="P:wing disc dorsal/ventral pattern formation"/>
    <property type="evidence" value="ECO:0000315"/>
    <property type="project" value="FlyBase"/>
</dbReference>
<comment type="function">
    <text evidence="2 3">Is a potent antagonist of neurogenic gene activity during sensory organ development. The expression of distinct cell fates by the trichogen (shaft) / tormogen (socket) sister cell pair depends on the level of H activity. A certain threshold level of H activity is required, below which both sister cells adopt the tormogen fate.</text>
</comment>
<comment type="subcellular location">
    <subcellularLocation>
        <location evidence="5">Nucleus</location>
    </subcellularLocation>
</comment>
<comment type="alternative products">
    <event type="alternative splicing"/>
    <isoform>
        <id>Q02308-1</id>
        <name>A</name>
        <name>D</name>
        <sequence type="displayed"/>
    </isoform>
    <isoform>
        <id>Q02308-2</id>
        <name>B</name>
        <name>C</name>
        <sequence type="described" ref="VSP_006952"/>
    </isoform>
</comment>
<comment type="tissue specificity">
    <text evidence="2 3">During embryogenesis expression is primarily in endo- and mesodermal cell layers. Ovary, embryos, larval and pupal imaginal disks.</text>
</comment>
<comment type="developmental stage">
    <text evidence="2">Expression peaks during embryogenesis and lowest during larval stages.</text>
</comment>
<comment type="sequence caution" evidence="5">
    <conflict type="erroneous initiation">
        <sequence resource="EMBL-CDS" id="AAA28607"/>
    </conflict>
</comment>
<comment type="sequence caution" evidence="5">
    <conflict type="erroneous initiation">
        <sequence resource="EMBL-CDS" id="AAK93230"/>
    </conflict>
</comment>
<gene>
    <name type="primary">H</name>
    <name type="ORF">CG5460</name>
</gene>
<evidence type="ECO:0000256" key="1">
    <source>
        <dbReference type="SAM" id="MobiDB-lite"/>
    </source>
</evidence>
<evidence type="ECO:0000269" key="2">
    <source>
    </source>
</evidence>
<evidence type="ECO:0000269" key="3">
    <source>
    </source>
</evidence>
<evidence type="ECO:0000269" key="4">
    <source>
    </source>
</evidence>
<evidence type="ECO:0000305" key="5"/>
<evidence type="ECO:0007829" key="6">
    <source>
        <dbReference type="PDB" id="5E24"/>
    </source>
</evidence>
<sequence>MALLNDVTSVAECNRQTTMTDEHKSNINSNSSHSSNNNNNGSSSNNDNNSNDDAASSSNSKNNNTSNESSHSNNNTSSIIAEAAAKFLLKNGLNGSSSTSYPPLPPPLPANLSRTTTPTTTTTPSSSSSTASNGFLPHAKTPKSSSIMAASAAVAASVVGATASKPTIDVLGGVLDYSSLGGAATGSLPTTAVVAAAAGTAKIGKGSNSGGSFDMGRTPISTHGNNSWGGYGGRLQFFKDGKFILELARSKDGDKSGWVSVTRKTFRPPSAATSATVTPTSAVTTAYPKNENSTSLSFSDDNSSIQSSPWQRDQPWKQSRPRRGISKELSLFFHRPRNSTLGRAALRTAARKRRRPHEPLTTSEDQQPIFATAIKAENGDDTLKAEAAEAVEIENVAVADTTTNEIKIEKPDTIKGEDDAERLEKEPKKAVSDDSESKEASPGQQVEPQPKDETVDVEMKMNTSEDEEPMTELPRITNAVNGDLNGDLKASIGKPKSKPKPKAKLSSIIQKLIDSVPARLEQMSKTSAVIASTTTSSDRIGGGLSHALTHKVSPPSSATAAGRLVEYHTQHVSPRKRILREFEKVSLEDNGCVNNGSGGASSGGAGGKRSRAKGTSTSSPAGKASPMNLAPPQGKPSPSPGSSSSSTSPATLSTQPTRLNSSYSIHSLLGGSSGSGSSSFSSSGKKCGDHPAAIISNVHHPQHSMYQPSSSSYPRALLTSPKSPDVSGSNGGGGKSPSHTGTKKRSPPYSAGSPVDYGHSFYRDPYAGAGRPSTSGSASQDLSPPRSSPASPATTPRTVPKKTASIRREFASPSASSSSCPSPGDRSASPPERRHMQQQPHLQRSSPLHYYMYPPPPQVNGNGSAGSPTSAPPTSNSSAAAVAAAAAAAAAYIPSPSIYNPYISTLAALRHNPLWMHHYQTGASPLLSPHPQPGGSAAAAAAAAAARLSPQSAYHAFAYNGVGAAVAAAAAAAAFGQPAPSPHTHPHLAHPHQHPHPAALTTHHSPAHLATPKLTDSSTDQMSATSSHRTASTSPSSSSASASSSAATSGASSSAMFHTSSLRNEQSSDLPLNLSKH</sequence>
<name>HLES_DROME</name>
<keyword id="KW-0002">3D-structure</keyword>
<keyword id="KW-0025">Alternative splicing</keyword>
<keyword id="KW-0217">Developmental protein</keyword>
<keyword id="KW-0238">DNA-binding</keyword>
<keyword id="KW-0539">Nucleus</keyword>
<keyword id="KW-0597">Phosphoprotein</keyword>
<keyword id="KW-1185">Reference proteome</keyword>
<proteinExistence type="evidence at protein level"/>
<accession>Q02308</accession>
<accession>A4V358</accession>
<accession>A4V359</accession>
<accession>Q6AWM8</accession>
<accession>Q960W5</accession>
<accession>Q9VDK0</accession>
<accession>Q9VDK1</accession>
<protein>
    <recommendedName>
        <fullName>Protein hairless</fullName>
    </recommendedName>
</protein>
<feature type="chain" id="PRO_0000083990" description="Protein hairless">
    <location>
        <begin position="1"/>
        <end position="1077"/>
    </location>
</feature>
<feature type="region of interest" description="Disordered" evidence="1">
    <location>
        <begin position="14"/>
        <end position="75"/>
    </location>
</feature>
<feature type="region of interest" description="Disordered" evidence="1">
    <location>
        <begin position="97"/>
        <end position="141"/>
    </location>
</feature>
<feature type="region of interest" description="Disordered" evidence="1">
    <location>
        <begin position="269"/>
        <end position="322"/>
    </location>
</feature>
<feature type="region of interest" description="Disordered" evidence="1">
    <location>
        <begin position="340"/>
        <end position="368"/>
    </location>
</feature>
<feature type="region of interest" description="Disordered" evidence="1">
    <location>
        <begin position="408"/>
        <end position="504"/>
    </location>
</feature>
<feature type="region of interest" description="Disordered" evidence="1">
    <location>
        <begin position="533"/>
        <end position="876"/>
    </location>
</feature>
<feature type="region of interest" description="Disordered" evidence="1">
    <location>
        <begin position="976"/>
        <end position="1077"/>
    </location>
</feature>
<feature type="compositionally biased region" description="Low complexity" evidence="1">
    <location>
        <begin position="26"/>
        <end position="75"/>
    </location>
</feature>
<feature type="compositionally biased region" description="Low complexity" evidence="1">
    <location>
        <begin position="115"/>
        <end position="130"/>
    </location>
</feature>
<feature type="compositionally biased region" description="Low complexity" evidence="1">
    <location>
        <begin position="269"/>
        <end position="286"/>
    </location>
</feature>
<feature type="compositionally biased region" description="Low complexity" evidence="1">
    <location>
        <begin position="293"/>
        <end position="308"/>
    </location>
</feature>
<feature type="compositionally biased region" description="Basic and acidic residues" evidence="1">
    <location>
        <begin position="408"/>
        <end position="439"/>
    </location>
</feature>
<feature type="compositionally biased region" description="Basic and acidic residues" evidence="1">
    <location>
        <begin position="449"/>
        <end position="459"/>
    </location>
</feature>
<feature type="compositionally biased region" description="Gly residues" evidence="1">
    <location>
        <begin position="596"/>
        <end position="607"/>
    </location>
</feature>
<feature type="compositionally biased region" description="Low complexity" evidence="1">
    <location>
        <begin position="640"/>
        <end position="684"/>
    </location>
</feature>
<feature type="compositionally biased region" description="Polar residues" evidence="1">
    <location>
        <begin position="704"/>
        <end position="713"/>
    </location>
</feature>
<feature type="compositionally biased region" description="Polar residues" evidence="1">
    <location>
        <begin position="772"/>
        <end position="782"/>
    </location>
</feature>
<feature type="compositionally biased region" description="Low complexity" evidence="1">
    <location>
        <begin position="783"/>
        <end position="798"/>
    </location>
</feature>
<feature type="compositionally biased region" description="Low complexity" evidence="1">
    <location>
        <begin position="811"/>
        <end position="829"/>
    </location>
</feature>
<feature type="compositionally biased region" description="Polar residues" evidence="1">
    <location>
        <begin position="837"/>
        <end position="846"/>
    </location>
</feature>
<feature type="compositionally biased region" description="Low complexity" evidence="1">
    <location>
        <begin position="865"/>
        <end position="876"/>
    </location>
</feature>
<feature type="compositionally biased region" description="Basic residues" evidence="1">
    <location>
        <begin position="984"/>
        <end position="995"/>
    </location>
</feature>
<feature type="compositionally biased region" description="Low complexity" evidence="1">
    <location>
        <begin position="996"/>
        <end position="1012"/>
    </location>
</feature>
<feature type="compositionally biased region" description="Low complexity" evidence="1">
    <location>
        <begin position="1023"/>
        <end position="1055"/>
    </location>
</feature>
<feature type="compositionally biased region" description="Polar residues" evidence="1">
    <location>
        <begin position="1056"/>
        <end position="1070"/>
    </location>
</feature>
<feature type="modified residue" description="Phosphoserine" evidence="4">
    <location>
        <position position="720"/>
    </location>
</feature>
<feature type="modified residue" description="Phosphoserine" evidence="4">
    <location>
        <position position="723"/>
    </location>
</feature>
<feature type="modified residue" description="Phosphoserine" evidence="4">
    <location>
        <position position="746"/>
    </location>
</feature>
<feature type="modified residue" description="Phosphoserine" evidence="4">
    <location>
        <position position="753"/>
    </location>
</feature>
<feature type="splice variant" id="VSP_006952" description="In isoform B." evidence="5">
    <location>
        <begin position="1"/>
        <end position="18"/>
    </location>
</feature>
<feature type="sequence conflict" description="In Ref. 5; AAT94449." evidence="5" ref="5">
    <original>T</original>
    <variation>S</variation>
    <location>
        <position position="8"/>
    </location>
</feature>
<feature type="sequence conflict" description="In Ref. 2; CAA47664." evidence="5" ref="2">
    <original>F</original>
    <variation>S</variation>
    <location>
        <position position="680"/>
    </location>
</feature>
<feature type="sequence conflict" description="In Ref. 5; AAT94449." evidence="5" ref="5">
    <original>L</original>
    <variation>P</variation>
    <location>
        <position position="914"/>
    </location>
</feature>
<feature type="strand" evidence="6">
    <location>
        <begin position="233"/>
        <end position="239"/>
    </location>
</feature>
<feature type="strand" evidence="6">
    <location>
        <begin position="242"/>
        <end position="249"/>
    </location>
</feature>
<feature type="strand" evidence="6">
    <location>
        <begin position="252"/>
        <end position="254"/>
    </location>
</feature>
<feature type="strand" evidence="6">
    <location>
        <begin position="258"/>
        <end position="260"/>
    </location>
</feature>
<reference key="1">
    <citation type="journal article" date="1992" name="Genes Dev.">
        <title>The Drosophila gene Hairless encodes a novel basic protein that controls alternative cell fates in adult sensory organ development.</title>
        <authorList>
            <person name="Bang A.G."/>
            <person name="Posakony J.W."/>
        </authorList>
    </citation>
    <scope>NUCLEOTIDE SEQUENCE [MRNA] (ISOFORM A)</scope>
    <scope>FUNCTION</scope>
    <scope>TISSUE SPECIFICITY</scope>
    <source>
        <tissue>Imaginal disk</tissue>
    </source>
</reference>
<reference key="2">
    <citation type="journal article" date="1992" name="Mech. Dev.">
        <title>Hairless, a Drosophila gene involved in neural development, encodes a novel, serine rich protein.</title>
        <authorList>
            <person name="Maier D."/>
            <person name="Stumm G."/>
            <person name="Kuhn K."/>
            <person name="Preiss A."/>
        </authorList>
    </citation>
    <scope>NUCLEOTIDE SEQUENCE [MRNA] (ISOFORM A)</scope>
    <scope>FUNCTION</scope>
    <scope>TISSUE SPECIFICITY</scope>
    <scope>DEVELOPMENTAL STAGE</scope>
</reference>
<reference key="3">
    <citation type="journal article" date="2000" name="Science">
        <title>The genome sequence of Drosophila melanogaster.</title>
        <authorList>
            <person name="Adams M.D."/>
            <person name="Celniker S.E."/>
            <person name="Holt R.A."/>
            <person name="Evans C.A."/>
            <person name="Gocayne J.D."/>
            <person name="Amanatides P.G."/>
            <person name="Scherer S.E."/>
            <person name="Li P.W."/>
            <person name="Hoskins R.A."/>
            <person name="Galle R.F."/>
            <person name="George R.A."/>
            <person name="Lewis S.E."/>
            <person name="Richards S."/>
            <person name="Ashburner M."/>
            <person name="Henderson S.N."/>
            <person name="Sutton G.G."/>
            <person name="Wortman J.R."/>
            <person name="Yandell M.D."/>
            <person name="Zhang Q."/>
            <person name="Chen L.X."/>
            <person name="Brandon R.C."/>
            <person name="Rogers Y.-H.C."/>
            <person name="Blazej R.G."/>
            <person name="Champe M."/>
            <person name="Pfeiffer B.D."/>
            <person name="Wan K.H."/>
            <person name="Doyle C."/>
            <person name="Baxter E.G."/>
            <person name="Helt G."/>
            <person name="Nelson C.R."/>
            <person name="Miklos G.L.G."/>
            <person name="Abril J.F."/>
            <person name="Agbayani A."/>
            <person name="An H.-J."/>
            <person name="Andrews-Pfannkoch C."/>
            <person name="Baldwin D."/>
            <person name="Ballew R.M."/>
            <person name="Basu A."/>
            <person name="Baxendale J."/>
            <person name="Bayraktaroglu L."/>
            <person name="Beasley E.M."/>
            <person name="Beeson K.Y."/>
            <person name="Benos P.V."/>
            <person name="Berman B.P."/>
            <person name="Bhandari D."/>
            <person name="Bolshakov S."/>
            <person name="Borkova D."/>
            <person name="Botchan M.R."/>
            <person name="Bouck J."/>
            <person name="Brokstein P."/>
            <person name="Brottier P."/>
            <person name="Burtis K.C."/>
            <person name="Busam D.A."/>
            <person name="Butler H."/>
            <person name="Cadieu E."/>
            <person name="Center A."/>
            <person name="Chandra I."/>
            <person name="Cherry J.M."/>
            <person name="Cawley S."/>
            <person name="Dahlke C."/>
            <person name="Davenport L.B."/>
            <person name="Davies P."/>
            <person name="de Pablos B."/>
            <person name="Delcher A."/>
            <person name="Deng Z."/>
            <person name="Mays A.D."/>
            <person name="Dew I."/>
            <person name="Dietz S.M."/>
            <person name="Dodson K."/>
            <person name="Doup L.E."/>
            <person name="Downes M."/>
            <person name="Dugan-Rocha S."/>
            <person name="Dunkov B.C."/>
            <person name="Dunn P."/>
            <person name="Durbin K.J."/>
            <person name="Evangelista C.C."/>
            <person name="Ferraz C."/>
            <person name="Ferriera S."/>
            <person name="Fleischmann W."/>
            <person name="Fosler C."/>
            <person name="Gabrielian A.E."/>
            <person name="Garg N.S."/>
            <person name="Gelbart W.M."/>
            <person name="Glasser K."/>
            <person name="Glodek A."/>
            <person name="Gong F."/>
            <person name="Gorrell J.H."/>
            <person name="Gu Z."/>
            <person name="Guan P."/>
            <person name="Harris M."/>
            <person name="Harris N.L."/>
            <person name="Harvey D.A."/>
            <person name="Heiman T.J."/>
            <person name="Hernandez J.R."/>
            <person name="Houck J."/>
            <person name="Hostin D."/>
            <person name="Houston K.A."/>
            <person name="Howland T.J."/>
            <person name="Wei M.-H."/>
            <person name="Ibegwam C."/>
            <person name="Jalali M."/>
            <person name="Kalush F."/>
            <person name="Karpen G.H."/>
            <person name="Ke Z."/>
            <person name="Kennison J.A."/>
            <person name="Ketchum K.A."/>
            <person name="Kimmel B.E."/>
            <person name="Kodira C.D."/>
            <person name="Kraft C.L."/>
            <person name="Kravitz S."/>
            <person name="Kulp D."/>
            <person name="Lai Z."/>
            <person name="Lasko P."/>
            <person name="Lei Y."/>
            <person name="Levitsky A.A."/>
            <person name="Li J.H."/>
            <person name="Li Z."/>
            <person name="Liang Y."/>
            <person name="Lin X."/>
            <person name="Liu X."/>
            <person name="Mattei B."/>
            <person name="McIntosh T.C."/>
            <person name="McLeod M.P."/>
            <person name="McPherson D."/>
            <person name="Merkulov G."/>
            <person name="Milshina N.V."/>
            <person name="Mobarry C."/>
            <person name="Morris J."/>
            <person name="Moshrefi A."/>
            <person name="Mount S.M."/>
            <person name="Moy M."/>
            <person name="Murphy B."/>
            <person name="Murphy L."/>
            <person name="Muzny D.M."/>
            <person name="Nelson D.L."/>
            <person name="Nelson D.R."/>
            <person name="Nelson K.A."/>
            <person name="Nixon K."/>
            <person name="Nusskern D.R."/>
            <person name="Pacleb J.M."/>
            <person name="Palazzolo M."/>
            <person name="Pittman G.S."/>
            <person name="Pan S."/>
            <person name="Pollard J."/>
            <person name="Puri V."/>
            <person name="Reese M.G."/>
            <person name="Reinert K."/>
            <person name="Remington K."/>
            <person name="Saunders R.D.C."/>
            <person name="Scheeler F."/>
            <person name="Shen H."/>
            <person name="Shue B.C."/>
            <person name="Siden-Kiamos I."/>
            <person name="Simpson M."/>
            <person name="Skupski M.P."/>
            <person name="Smith T.J."/>
            <person name="Spier E."/>
            <person name="Spradling A.C."/>
            <person name="Stapleton M."/>
            <person name="Strong R."/>
            <person name="Sun E."/>
            <person name="Svirskas R."/>
            <person name="Tector C."/>
            <person name="Turner R."/>
            <person name="Venter E."/>
            <person name="Wang A.H."/>
            <person name="Wang X."/>
            <person name="Wang Z.-Y."/>
            <person name="Wassarman D.A."/>
            <person name="Weinstock G.M."/>
            <person name="Weissenbach J."/>
            <person name="Williams S.M."/>
            <person name="Woodage T."/>
            <person name="Worley K.C."/>
            <person name="Wu D."/>
            <person name="Yang S."/>
            <person name="Yao Q.A."/>
            <person name="Ye J."/>
            <person name="Yeh R.-F."/>
            <person name="Zaveri J.S."/>
            <person name="Zhan M."/>
            <person name="Zhang G."/>
            <person name="Zhao Q."/>
            <person name="Zheng L."/>
            <person name="Zheng X.H."/>
            <person name="Zhong F.N."/>
            <person name="Zhong W."/>
            <person name="Zhou X."/>
            <person name="Zhu S.C."/>
            <person name="Zhu X."/>
            <person name="Smith H.O."/>
            <person name="Gibbs R.A."/>
            <person name="Myers E.W."/>
            <person name="Rubin G.M."/>
            <person name="Venter J.C."/>
        </authorList>
    </citation>
    <scope>NUCLEOTIDE SEQUENCE [LARGE SCALE GENOMIC DNA]</scope>
    <source>
        <strain>Berkeley</strain>
    </source>
</reference>
<reference key="4">
    <citation type="journal article" date="2002" name="Genome Biol.">
        <title>Annotation of the Drosophila melanogaster euchromatic genome: a systematic review.</title>
        <authorList>
            <person name="Misra S."/>
            <person name="Crosby M.A."/>
            <person name="Mungall C.J."/>
            <person name="Matthews B.B."/>
            <person name="Campbell K.S."/>
            <person name="Hradecky P."/>
            <person name="Huang Y."/>
            <person name="Kaminker J.S."/>
            <person name="Millburn G.H."/>
            <person name="Prochnik S.E."/>
            <person name="Smith C.D."/>
            <person name="Tupy J.L."/>
            <person name="Whitfield E.J."/>
            <person name="Bayraktaroglu L."/>
            <person name="Berman B.P."/>
            <person name="Bettencourt B.R."/>
            <person name="Celniker S.E."/>
            <person name="de Grey A.D.N.J."/>
            <person name="Drysdale R.A."/>
            <person name="Harris N.L."/>
            <person name="Richter J."/>
            <person name="Russo S."/>
            <person name="Schroeder A.J."/>
            <person name="Shu S.Q."/>
            <person name="Stapleton M."/>
            <person name="Yamada C."/>
            <person name="Ashburner M."/>
            <person name="Gelbart W.M."/>
            <person name="Rubin G.M."/>
            <person name="Lewis S.E."/>
        </authorList>
    </citation>
    <scope>GENOME REANNOTATION</scope>
    <scope>ALTERNATIVE SPLICING</scope>
    <source>
        <strain>Berkeley</strain>
    </source>
</reference>
<reference key="5">
    <citation type="submission" date="2004-08" db="EMBL/GenBank/DDBJ databases">
        <authorList>
            <person name="Stapleton M."/>
            <person name="Carlson J.W."/>
            <person name="Chavez C."/>
            <person name="Frise E."/>
            <person name="George R.A."/>
            <person name="Pacleb J.M."/>
            <person name="Park S."/>
            <person name="Wan K.H."/>
            <person name="Yu C."/>
            <person name="Rubin G.M."/>
            <person name="Celniker S.E."/>
        </authorList>
    </citation>
    <scope>NUCLEOTIDE SEQUENCE [LARGE SCALE MRNA] (ISOFORM A)</scope>
    <source>
        <strain>Berkeley</strain>
        <tissue>Embryo</tissue>
    </source>
</reference>
<reference key="6">
    <citation type="journal article" date="2002" name="Genome Biol.">
        <title>A Drosophila full-length cDNA resource.</title>
        <authorList>
            <person name="Stapleton M."/>
            <person name="Carlson J.W."/>
            <person name="Brokstein P."/>
            <person name="Yu C."/>
            <person name="Champe M."/>
            <person name="George R.A."/>
            <person name="Guarin H."/>
            <person name="Kronmiller B."/>
            <person name="Pacleb J.M."/>
            <person name="Park S."/>
            <person name="Wan K.H."/>
            <person name="Rubin G.M."/>
            <person name="Celniker S.E."/>
        </authorList>
    </citation>
    <scope>NUCLEOTIDE SEQUENCE [LARGE SCALE MRNA] OF 265-1077</scope>
    <source>
        <strain>Berkeley</strain>
        <tissue>Embryo</tissue>
    </source>
</reference>
<reference key="7">
    <citation type="journal article" date="2008" name="J. Proteome Res.">
        <title>Phosphoproteome analysis of Drosophila melanogaster embryos.</title>
        <authorList>
            <person name="Zhai B."/>
            <person name="Villen J."/>
            <person name="Beausoleil S.A."/>
            <person name="Mintseris J."/>
            <person name="Gygi S.P."/>
        </authorList>
    </citation>
    <scope>PHOSPHORYLATION [LARGE SCALE ANALYSIS] AT SER-720; SER-723; SER-746 AND SER-753</scope>
    <scope>IDENTIFICATION BY MASS SPECTROMETRY</scope>
    <source>
        <tissue>Embryo</tissue>
    </source>
</reference>
<organism>
    <name type="scientific">Drosophila melanogaster</name>
    <name type="common">Fruit fly</name>
    <dbReference type="NCBI Taxonomy" id="7227"/>
    <lineage>
        <taxon>Eukaryota</taxon>
        <taxon>Metazoa</taxon>
        <taxon>Ecdysozoa</taxon>
        <taxon>Arthropoda</taxon>
        <taxon>Hexapoda</taxon>
        <taxon>Insecta</taxon>
        <taxon>Pterygota</taxon>
        <taxon>Neoptera</taxon>
        <taxon>Endopterygota</taxon>
        <taxon>Diptera</taxon>
        <taxon>Brachycera</taxon>
        <taxon>Muscomorpha</taxon>
        <taxon>Ephydroidea</taxon>
        <taxon>Drosophilidae</taxon>
        <taxon>Drosophila</taxon>
        <taxon>Sophophora</taxon>
    </lineage>
</organism>